<keyword id="KW-0067">ATP-binding</keyword>
<keyword id="KW-0131">Cell cycle</keyword>
<keyword id="KW-0132">Cell division</keyword>
<keyword id="KW-0133">Cell shape</keyword>
<keyword id="KW-0961">Cell wall biogenesis/degradation</keyword>
<keyword id="KW-0963">Cytoplasm</keyword>
<keyword id="KW-0436">Ligase</keyword>
<keyword id="KW-0460">Magnesium</keyword>
<keyword id="KW-0464">Manganese</keyword>
<keyword id="KW-0479">Metal-binding</keyword>
<keyword id="KW-0511">Multifunctional enzyme</keyword>
<keyword id="KW-0547">Nucleotide-binding</keyword>
<keyword id="KW-0573">Peptidoglycan synthesis</keyword>
<protein>
    <recommendedName>
        <fullName>Bifunctional enzyme MurC/Ddl</fullName>
    </recommendedName>
    <domain>
        <recommendedName>
            <fullName>UDP-N-acetylmuramate--L-alanine ligase</fullName>
            <ecNumber>6.3.2.8</ecNumber>
        </recommendedName>
        <alternativeName>
            <fullName>UDP-N-acetylmuramoyl-L-alanine synthetase</fullName>
        </alternativeName>
    </domain>
    <domain>
        <recommendedName>
            <fullName>D-alanine--D-alanine ligase</fullName>
            <ecNumber>6.3.2.4</ecNumber>
        </recommendedName>
        <alternativeName>
            <fullName>D-Ala-D-Ala ligase</fullName>
        </alternativeName>
        <alternativeName>
            <fullName>D-alanylalanine synthetase</fullName>
        </alternativeName>
    </domain>
</protein>
<gene>
    <name type="primary">murC/ddlA</name>
    <name type="ordered locus">CCA_00863</name>
</gene>
<proteinExistence type="inferred from homology"/>
<accession>Q821S4</accession>
<name>MUDD_CHLCV</name>
<sequence>MNRKNHYHFIGIGGIGMSALAHILLDRGYSVSGSDLNQGITIDKLIAKGAAYLPGHKESYVPEEGTIIYGSGIAKDNVEYKEALRKQLPLVHRAELLALLMQEQTSILVSGSHGKTTVSSLITAIFQTAKKDPSYAIGGLNSQYLNGYSGSSEYFIAEADESDGSLKHYFPKVAVVTNLDNEHLSNFEGSKEKLAQTIEEFTRKVDDPNLCFYNGDCQELKGRISGISYGFSQECALYIYSHRQEGWRSVFSLSFLGKDYLDIDLNLIGKHNVANAAAAIGVALTFGIDEESIREALKSFSGVQRRMERKNTSEKFLFLEDYAHHPSEISCTLRALRDAVGLRRIIAICQPHRFSRLLYCLEEFFNAFQDADEVILTDVYSAGEMPLDLPSPEKLAETISLSSHVCCTYVPYDNVIEHLKQNIRVHDVCISLGAGNIHTVGNALKDFEPKKLSVGVVCGGQSCEHDVSLLSARNVVQYLSPQHYDVQYFVINRQGLWSQVANLDAGSDYNSKNYHVLSSKIAEALANLDFVLPILHGPFGEDGTLQGFLEIANKPYGGPSLLFSAISMDKIMTKRLAASVGVPVVPYQPLTLPTWKRTPELCMRRILETFTFPMFVKTAHLGSSIGVFEVHNETELKAKISEAFLYDTDVFIEESRLGSREIEVSCLGDACSCYYISEPHERRGSKGFIGYEEKYGFNGKSSATIQYDLNLSEESKTRVKELTERVYRVIQGKGSCRIDFFLDREGNFWLSEMNPIPGMTKSSPFLHDFARLGWTFEQIVHQLIIAGLHKFDQKKKVSSTFNKQCLLTAKS</sequence>
<evidence type="ECO:0000250" key="1"/>
<evidence type="ECO:0000255" key="2"/>
<evidence type="ECO:0000305" key="3"/>
<dbReference type="EC" id="6.3.2.8"/>
<dbReference type="EC" id="6.3.2.4"/>
<dbReference type="EMBL" id="AE015925">
    <property type="protein sequence ID" value="AAP05604.1"/>
    <property type="molecule type" value="Genomic_DNA"/>
</dbReference>
<dbReference type="RefSeq" id="WP_011006818.1">
    <property type="nucleotide sequence ID" value="NC_003361.3"/>
</dbReference>
<dbReference type="SMR" id="Q821S4"/>
<dbReference type="STRING" id="227941.CCA_00863"/>
<dbReference type="KEGG" id="cca:CCA_00863"/>
<dbReference type="eggNOG" id="COG0773">
    <property type="taxonomic scope" value="Bacteria"/>
</dbReference>
<dbReference type="eggNOG" id="COG1181">
    <property type="taxonomic scope" value="Bacteria"/>
</dbReference>
<dbReference type="HOGENOM" id="CLU_019395_0_0_0"/>
<dbReference type="OrthoDB" id="9804126at2"/>
<dbReference type="UniPathway" id="UPA00219"/>
<dbReference type="Proteomes" id="UP000002193">
    <property type="component" value="Chromosome"/>
</dbReference>
<dbReference type="GO" id="GO:0005737">
    <property type="term" value="C:cytoplasm"/>
    <property type="evidence" value="ECO:0007669"/>
    <property type="project" value="UniProtKB-SubCell"/>
</dbReference>
<dbReference type="GO" id="GO:0005524">
    <property type="term" value="F:ATP binding"/>
    <property type="evidence" value="ECO:0007669"/>
    <property type="project" value="UniProtKB-UniRule"/>
</dbReference>
<dbReference type="GO" id="GO:0008716">
    <property type="term" value="F:D-alanine-D-alanine ligase activity"/>
    <property type="evidence" value="ECO:0007669"/>
    <property type="project" value="UniProtKB-UniRule"/>
</dbReference>
<dbReference type="GO" id="GO:0046872">
    <property type="term" value="F:metal ion binding"/>
    <property type="evidence" value="ECO:0007669"/>
    <property type="project" value="UniProtKB-KW"/>
</dbReference>
<dbReference type="GO" id="GO:0008763">
    <property type="term" value="F:UDP-N-acetylmuramate-L-alanine ligase activity"/>
    <property type="evidence" value="ECO:0007669"/>
    <property type="project" value="UniProtKB-UniRule"/>
</dbReference>
<dbReference type="GO" id="GO:0051301">
    <property type="term" value="P:cell division"/>
    <property type="evidence" value="ECO:0007669"/>
    <property type="project" value="UniProtKB-KW"/>
</dbReference>
<dbReference type="GO" id="GO:0071555">
    <property type="term" value="P:cell wall organization"/>
    <property type="evidence" value="ECO:0007669"/>
    <property type="project" value="UniProtKB-KW"/>
</dbReference>
<dbReference type="GO" id="GO:0009252">
    <property type="term" value="P:peptidoglycan biosynthetic process"/>
    <property type="evidence" value="ECO:0007669"/>
    <property type="project" value="UniProtKB-UniRule"/>
</dbReference>
<dbReference type="GO" id="GO:0008360">
    <property type="term" value="P:regulation of cell shape"/>
    <property type="evidence" value="ECO:0007669"/>
    <property type="project" value="UniProtKB-KW"/>
</dbReference>
<dbReference type="Gene3D" id="3.40.50.20">
    <property type="match status" value="1"/>
</dbReference>
<dbReference type="Gene3D" id="3.30.1490.20">
    <property type="entry name" value="ATP-grasp fold, A domain"/>
    <property type="match status" value="1"/>
</dbReference>
<dbReference type="Gene3D" id="3.30.470.20">
    <property type="entry name" value="ATP-grasp fold, B domain"/>
    <property type="match status" value="1"/>
</dbReference>
<dbReference type="Gene3D" id="3.90.190.20">
    <property type="entry name" value="Mur ligase, C-terminal domain"/>
    <property type="match status" value="1"/>
</dbReference>
<dbReference type="Gene3D" id="3.40.1190.10">
    <property type="entry name" value="Mur-like, catalytic domain"/>
    <property type="match status" value="1"/>
</dbReference>
<dbReference type="Gene3D" id="3.40.50.720">
    <property type="entry name" value="NAD(P)-binding Rossmann-like Domain"/>
    <property type="match status" value="1"/>
</dbReference>
<dbReference type="HAMAP" id="MF_00047">
    <property type="entry name" value="Dala_Dala_lig"/>
    <property type="match status" value="1"/>
</dbReference>
<dbReference type="HAMAP" id="MF_00046">
    <property type="entry name" value="MurC"/>
    <property type="match status" value="1"/>
</dbReference>
<dbReference type="InterPro" id="IPR011761">
    <property type="entry name" value="ATP-grasp"/>
</dbReference>
<dbReference type="InterPro" id="IPR013815">
    <property type="entry name" value="ATP_grasp_subdomain_1"/>
</dbReference>
<dbReference type="InterPro" id="IPR000291">
    <property type="entry name" value="D-Ala_lig_Van_CS"/>
</dbReference>
<dbReference type="InterPro" id="IPR005905">
    <property type="entry name" value="D_ala_D_ala"/>
</dbReference>
<dbReference type="InterPro" id="IPR011095">
    <property type="entry name" value="Dala_Dala_lig_C"/>
</dbReference>
<dbReference type="InterPro" id="IPR011127">
    <property type="entry name" value="Dala_Dala_lig_N"/>
</dbReference>
<dbReference type="InterPro" id="IPR036565">
    <property type="entry name" value="Mur-like_cat_sf"/>
</dbReference>
<dbReference type="InterPro" id="IPR004101">
    <property type="entry name" value="Mur_ligase_C"/>
</dbReference>
<dbReference type="InterPro" id="IPR036615">
    <property type="entry name" value="Mur_ligase_C_dom_sf"/>
</dbReference>
<dbReference type="InterPro" id="IPR013221">
    <property type="entry name" value="Mur_ligase_cen"/>
</dbReference>
<dbReference type="InterPro" id="IPR000713">
    <property type="entry name" value="Mur_ligase_N"/>
</dbReference>
<dbReference type="InterPro" id="IPR050061">
    <property type="entry name" value="MurCDEF_pg_biosynth"/>
</dbReference>
<dbReference type="InterPro" id="IPR016185">
    <property type="entry name" value="PreATP-grasp_dom_sf"/>
</dbReference>
<dbReference type="InterPro" id="IPR005758">
    <property type="entry name" value="UDP-N-AcMur_Ala_ligase_MurC"/>
</dbReference>
<dbReference type="NCBIfam" id="TIGR01205">
    <property type="entry name" value="D_ala_D_alaTIGR"/>
    <property type="match status" value="1"/>
</dbReference>
<dbReference type="NCBIfam" id="TIGR01082">
    <property type="entry name" value="murC"/>
    <property type="match status" value="1"/>
</dbReference>
<dbReference type="NCBIfam" id="NF002528">
    <property type="entry name" value="PRK01966.1-4"/>
    <property type="match status" value="1"/>
</dbReference>
<dbReference type="NCBIfam" id="NF011171">
    <property type="entry name" value="PRK14573.1"/>
    <property type="match status" value="1"/>
</dbReference>
<dbReference type="PANTHER" id="PTHR43445:SF3">
    <property type="entry name" value="UDP-N-ACETYLMURAMATE--L-ALANINE LIGASE"/>
    <property type="match status" value="1"/>
</dbReference>
<dbReference type="PANTHER" id="PTHR43445">
    <property type="entry name" value="UDP-N-ACETYLMURAMATE--L-ALANINE LIGASE-RELATED"/>
    <property type="match status" value="1"/>
</dbReference>
<dbReference type="Pfam" id="PF07478">
    <property type="entry name" value="Dala_Dala_lig_C"/>
    <property type="match status" value="1"/>
</dbReference>
<dbReference type="Pfam" id="PF01820">
    <property type="entry name" value="Dala_Dala_lig_N"/>
    <property type="match status" value="1"/>
</dbReference>
<dbReference type="Pfam" id="PF01225">
    <property type="entry name" value="Mur_ligase"/>
    <property type="match status" value="1"/>
</dbReference>
<dbReference type="Pfam" id="PF02875">
    <property type="entry name" value="Mur_ligase_C"/>
    <property type="match status" value="1"/>
</dbReference>
<dbReference type="Pfam" id="PF08245">
    <property type="entry name" value="Mur_ligase_M"/>
    <property type="match status" value="1"/>
</dbReference>
<dbReference type="SUPFAM" id="SSF56059">
    <property type="entry name" value="Glutathione synthetase ATP-binding domain-like"/>
    <property type="match status" value="1"/>
</dbReference>
<dbReference type="SUPFAM" id="SSF51984">
    <property type="entry name" value="MurCD N-terminal domain"/>
    <property type="match status" value="1"/>
</dbReference>
<dbReference type="SUPFAM" id="SSF53623">
    <property type="entry name" value="MurD-like peptide ligases, catalytic domain"/>
    <property type="match status" value="1"/>
</dbReference>
<dbReference type="SUPFAM" id="SSF53244">
    <property type="entry name" value="MurD-like peptide ligases, peptide-binding domain"/>
    <property type="match status" value="1"/>
</dbReference>
<dbReference type="SUPFAM" id="SSF52440">
    <property type="entry name" value="PreATP-grasp domain"/>
    <property type="match status" value="1"/>
</dbReference>
<dbReference type="PROSITE" id="PS50975">
    <property type="entry name" value="ATP_GRASP"/>
    <property type="match status" value="1"/>
</dbReference>
<dbReference type="PROSITE" id="PS00843">
    <property type="entry name" value="DALA_DALA_LIGASE_1"/>
    <property type="match status" value="1"/>
</dbReference>
<dbReference type="PROSITE" id="PS00844">
    <property type="entry name" value="DALA_DALA_LIGASE_2"/>
    <property type="match status" value="1"/>
</dbReference>
<organism>
    <name type="scientific">Chlamydia caviae (strain ATCC VR-813 / DSM 19441 / 03DC25 / GPIC)</name>
    <name type="common">Chlamydophila caviae</name>
    <dbReference type="NCBI Taxonomy" id="227941"/>
    <lineage>
        <taxon>Bacteria</taxon>
        <taxon>Pseudomonadati</taxon>
        <taxon>Chlamydiota</taxon>
        <taxon>Chlamydiia</taxon>
        <taxon>Chlamydiales</taxon>
        <taxon>Chlamydiaceae</taxon>
        <taxon>Chlamydia/Chlamydophila group</taxon>
        <taxon>Chlamydia</taxon>
    </lineage>
</organism>
<reference key="1">
    <citation type="journal article" date="2003" name="Nucleic Acids Res.">
        <title>Genome sequence of Chlamydophila caviae (Chlamydia psittaci GPIC): examining the role of niche-specific genes in the evolution of the Chlamydiaceae.</title>
        <authorList>
            <person name="Read T.D."/>
            <person name="Myers G.S.A."/>
            <person name="Brunham R.C."/>
            <person name="Nelson W.C."/>
            <person name="Paulsen I.T."/>
            <person name="Heidelberg J.F."/>
            <person name="Holtzapple E.K."/>
            <person name="Khouri H.M."/>
            <person name="Federova N.B."/>
            <person name="Carty H.A."/>
            <person name="Umayam L.A."/>
            <person name="Haft D.H."/>
            <person name="Peterson J.D."/>
            <person name="Beanan M.J."/>
            <person name="White O."/>
            <person name="Salzberg S.L."/>
            <person name="Hsia R.-C."/>
            <person name="McClarty G."/>
            <person name="Rank R.G."/>
            <person name="Bavoil P.M."/>
            <person name="Fraser C.M."/>
        </authorList>
    </citation>
    <scope>NUCLEOTIDE SEQUENCE [LARGE SCALE GENOMIC DNA]</scope>
    <source>
        <strain>ATCC VR-813 / DSM 19441 / 03DC25 / GPIC</strain>
    </source>
</reference>
<comment type="catalytic activity">
    <reaction>
        <text>UDP-N-acetyl-alpha-D-muramate + L-alanine + ATP = UDP-N-acetyl-alpha-D-muramoyl-L-alanine + ADP + phosphate + H(+)</text>
        <dbReference type="Rhea" id="RHEA:23372"/>
        <dbReference type="ChEBI" id="CHEBI:15378"/>
        <dbReference type="ChEBI" id="CHEBI:30616"/>
        <dbReference type="ChEBI" id="CHEBI:43474"/>
        <dbReference type="ChEBI" id="CHEBI:57972"/>
        <dbReference type="ChEBI" id="CHEBI:70757"/>
        <dbReference type="ChEBI" id="CHEBI:83898"/>
        <dbReference type="ChEBI" id="CHEBI:456216"/>
        <dbReference type="EC" id="6.3.2.8"/>
    </reaction>
</comment>
<comment type="catalytic activity">
    <reaction>
        <text>2 D-alanine + ATP = D-alanyl-D-alanine + ADP + phosphate + H(+)</text>
        <dbReference type="Rhea" id="RHEA:11224"/>
        <dbReference type="ChEBI" id="CHEBI:15378"/>
        <dbReference type="ChEBI" id="CHEBI:30616"/>
        <dbReference type="ChEBI" id="CHEBI:43474"/>
        <dbReference type="ChEBI" id="CHEBI:57416"/>
        <dbReference type="ChEBI" id="CHEBI:57822"/>
        <dbReference type="ChEBI" id="CHEBI:456216"/>
        <dbReference type="EC" id="6.3.2.4"/>
    </reaction>
</comment>
<comment type="cofactor">
    <cofactor evidence="1">
        <name>Mg(2+)</name>
        <dbReference type="ChEBI" id="CHEBI:18420"/>
    </cofactor>
    <cofactor evidence="1">
        <name>Mn(2+)</name>
        <dbReference type="ChEBI" id="CHEBI:29035"/>
    </cofactor>
    <text evidence="1">Binds 2 magnesium or manganese ions per subunit.</text>
</comment>
<comment type="pathway">
    <text>Cell wall biogenesis; peptidoglycan biosynthesis.</text>
</comment>
<comment type="subcellular location">
    <subcellularLocation>
        <location evidence="1">Cytoplasm</location>
    </subcellularLocation>
</comment>
<comment type="similarity">
    <text evidence="3">In the N-terminal section; belongs to the MurCDEF family.</text>
</comment>
<comment type="similarity">
    <text evidence="3">In the C-terminal section; belongs to the D-alanine--D-alanine ligase family.</text>
</comment>
<feature type="chain" id="PRO_0000177913" description="Bifunctional enzyme MurC/Ddl">
    <location>
        <begin position="1"/>
        <end position="811"/>
    </location>
</feature>
<feature type="domain" description="ATP-grasp">
    <location>
        <begin position="574"/>
        <end position="785"/>
    </location>
</feature>
<feature type="region of interest" description="UDP-N-acetylmuramate--alanine ligase">
    <location>
        <begin position="1"/>
        <end position="450"/>
    </location>
</feature>
<feature type="region of interest" description="D-alanine--D-alanine ligase">
    <location>
        <begin position="451"/>
        <end position="811"/>
    </location>
</feature>
<feature type="binding site" evidence="2">
    <location>
        <begin position="111"/>
        <end position="117"/>
    </location>
    <ligand>
        <name>ATP</name>
        <dbReference type="ChEBI" id="CHEBI:30616"/>
    </ligand>
</feature>
<feature type="binding site" evidence="1">
    <location>
        <begin position="607"/>
        <end position="662"/>
    </location>
    <ligand>
        <name>ATP</name>
        <dbReference type="ChEBI" id="CHEBI:30616"/>
    </ligand>
</feature>
<feature type="binding site" evidence="1">
    <location>
        <position position="739"/>
    </location>
    <ligand>
        <name>Mg(2+)</name>
        <dbReference type="ChEBI" id="CHEBI:18420"/>
        <label>1</label>
    </ligand>
</feature>
<feature type="binding site" evidence="1">
    <location>
        <position position="752"/>
    </location>
    <ligand>
        <name>Mg(2+)</name>
        <dbReference type="ChEBI" id="CHEBI:18420"/>
        <label>1</label>
    </ligand>
</feature>
<feature type="binding site" evidence="1">
    <location>
        <position position="752"/>
    </location>
    <ligand>
        <name>Mg(2+)</name>
        <dbReference type="ChEBI" id="CHEBI:18420"/>
        <label>2</label>
    </ligand>
</feature>
<feature type="binding site" evidence="1">
    <location>
        <position position="754"/>
    </location>
    <ligand>
        <name>Mg(2+)</name>
        <dbReference type="ChEBI" id="CHEBI:18420"/>
        <label>2</label>
    </ligand>
</feature>